<reference key="1">
    <citation type="journal article" date="1999" name="Mol. Biol. Evol.">
        <title>Sequence evolution of the CCR5 chemokine receptor gene in primates.</title>
        <authorList>
            <person name="Zhang Y.-W."/>
            <person name="Ryder O.A."/>
            <person name="Zhang Y.-P."/>
        </authorList>
    </citation>
    <scope>NUCLEOTIDE SEQUENCE [GENOMIC DNA]</scope>
</reference>
<name>CCR5_MACAR</name>
<gene>
    <name type="primary">CCR5</name>
    <name type="synonym">CMKBR5</name>
</gene>
<feature type="chain" id="PRO_0000069262" description="C-C chemokine receptor type 5">
    <location>
        <begin position="1"/>
        <end position="352"/>
    </location>
</feature>
<feature type="topological domain" description="Extracellular" evidence="3">
    <location>
        <begin position="1"/>
        <end position="30"/>
    </location>
</feature>
<feature type="transmembrane region" description="Helical; Name=1" evidence="3">
    <location>
        <begin position="31"/>
        <end position="58"/>
    </location>
</feature>
<feature type="topological domain" description="Cytoplasmic" evidence="3">
    <location>
        <begin position="59"/>
        <end position="68"/>
    </location>
</feature>
<feature type="transmembrane region" description="Helical; Name=2" evidence="3">
    <location>
        <begin position="69"/>
        <end position="89"/>
    </location>
</feature>
<feature type="topological domain" description="Extracellular" evidence="3">
    <location>
        <begin position="90"/>
        <end position="102"/>
    </location>
</feature>
<feature type="transmembrane region" description="Helical; Name=3" evidence="3">
    <location>
        <begin position="103"/>
        <end position="124"/>
    </location>
</feature>
<feature type="topological domain" description="Cytoplasmic" evidence="3">
    <location>
        <begin position="125"/>
        <end position="141"/>
    </location>
</feature>
<feature type="transmembrane region" description="Helical; Name=4" evidence="3">
    <location>
        <begin position="142"/>
        <end position="166"/>
    </location>
</feature>
<feature type="topological domain" description="Extracellular" evidence="3">
    <location>
        <begin position="167"/>
        <end position="198"/>
    </location>
</feature>
<feature type="transmembrane region" description="Helical; Name=5" evidence="3">
    <location>
        <begin position="199"/>
        <end position="218"/>
    </location>
</feature>
<feature type="topological domain" description="Cytoplasmic" evidence="3">
    <location>
        <begin position="219"/>
        <end position="235"/>
    </location>
</feature>
<feature type="transmembrane region" description="Helical; Name=6" evidence="3">
    <location>
        <begin position="236"/>
        <end position="260"/>
    </location>
</feature>
<feature type="topological domain" description="Extracellular" evidence="3">
    <location>
        <begin position="261"/>
        <end position="277"/>
    </location>
</feature>
<feature type="transmembrane region" description="Helical; Name=7" evidence="3">
    <location>
        <begin position="278"/>
        <end position="301"/>
    </location>
</feature>
<feature type="topological domain" description="Cytoplasmic" evidence="3">
    <location>
        <begin position="302"/>
        <end position="352"/>
    </location>
</feature>
<feature type="modified residue" description="Sulfotyrosine" evidence="1">
    <location>
        <position position="3"/>
    </location>
</feature>
<feature type="modified residue" description="Sulfotyrosine" evidence="3">
    <location>
        <position position="10"/>
    </location>
</feature>
<feature type="modified residue" description="Sulfotyrosine" evidence="3">
    <location>
        <position position="14"/>
    </location>
</feature>
<feature type="modified residue" description="Sulfotyrosine" evidence="3">
    <location>
        <position position="15"/>
    </location>
</feature>
<feature type="modified residue" description="Phosphoserine; by BARK1" evidence="1">
    <location>
        <position position="336"/>
    </location>
</feature>
<feature type="modified residue" description="Phosphoserine; by BARK1" evidence="1">
    <location>
        <position position="337"/>
    </location>
</feature>
<feature type="modified residue" description="Phosphoserine; by BARK1" evidence="1">
    <location>
        <position position="342"/>
    </location>
</feature>
<feature type="modified residue" description="Phosphoserine; by BARK1" evidence="1">
    <location>
        <position position="349"/>
    </location>
</feature>
<feature type="lipid moiety-binding region" description="S-palmitoyl cysteine" evidence="1">
    <location>
        <position position="321"/>
    </location>
</feature>
<feature type="lipid moiety-binding region" description="S-palmitoyl cysteine" evidence="1">
    <location>
        <position position="323"/>
    </location>
</feature>
<feature type="lipid moiety-binding region" description="S-palmitoyl cysteine" evidence="1">
    <location>
        <position position="324"/>
    </location>
</feature>
<feature type="glycosylation site" description="O-linked (GalNAc...) serine" evidence="1">
    <location>
        <position position="6"/>
    </location>
</feature>
<feature type="glycosylation site" description="O-linked (GalNAc...) serine" evidence="1">
    <location>
        <position position="7"/>
    </location>
</feature>
<feature type="disulfide bond" evidence="1">
    <location>
        <begin position="20"/>
        <end position="269"/>
    </location>
</feature>
<feature type="disulfide bond" evidence="4">
    <location>
        <begin position="101"/>
        <end position="178"/>
    </location>
</feature>
<evidence type="ECO:0000250" key="1">
    <source>
        <dbReference type="UniProtKB" id="P51681"/>
    </source>
</evidence>
<evidence type="ECO:0000250" key="2">
    <source>
        <dbReference type="UniProtKB" id="Q9XT76"/>
    </source>
</evidence>
<evidence type="ECO:0000255" key="3"/>
<evidence type="ECO:0000255" key="4">
    <source>
        <dbReference type="PROSITE-ProRule" id="PRU00521"/>
    </source>
</evidence>
<dbReference type="EMBL" id="AF075450">
    <property type="protein sequence ID" value="AAD19862.1"/>
    <property type="molecule type" value="Genomic_DNA"/>
</dbReference>
<dbReference type="SMR" id="O97975"/>
<dbReference type="GlyCosmos" id="O97975">
    <property type="glycosylation" value="2 sites, No reported glycans"/>
</dbReference>
<dbReference type="GO" id="GO:0005737">
    <property type="term" value="C:cytoplasm"/>
    <property type="evidence" value="ECO:0007669"/>
    <property type="project" value="TreeGrafter"/>
</dbReference>
<dbReference type="GO" id="GO:0009897">
    <property type="term" value="C:external side of plasma membrane"/>
    <property type="evidence" value="ECO:0000250"/>
    <property type="project" value="UniProtKB"/>
</dbReference>
<dbReference type="GO" id="GO:0016493">
    <property type="term" value="F:C-C chemokine receptor activity"/>
    <property type="evidence" value="ECO:0000250"/>
    <property type="project" value="UniProtKB"/>
</dbReference>
<dbReference type="GO" id="GO:0071791">
    <property type="term" value="F:chemokine (C-C motif) ligand 5 binding"/>
    <property type="evidence" value="ECO:0007669"/>
    <property type="project" value="TreeGrafter"/>
</dbReference>
<dbReference type="GO" id="GO:0019722">
    <property type="term" value="P:calcium-mediated signaling"/>
    <property type="evidence" value="ECO:0007669"/>
    <property type="project" value="TreeGrafter"/>
</dbReference>
<dbReference type="GO" id="GO:0060326">
    <property type="term" value="P:cell chemotaxis"/>
    <property type="evidence" value="ECO:0007669"/>
    <property type="project" value="TreeGrafter"/>
</dbReference>
<dbReference type="GO" id="GO:0006955">
    <property type="term" value="P:immune response"/>
    <property type="evidence" value="ECO:0007669"/>
    <property type="project" value="InterPro"/>
</dbReference>
<dbReference type="GO" id="GO:0006954">
    <property type="term" value="P:inflammatory response"/>
    <property type="evidence" value="ECO:0007669"/>
    <property type="project" value="InterPro"/>
</dbReference>
<dbReference type="GO" id="GO:0007204">
    <property type="term" value="P:positive regulation of cytosolic calcium ion concentration"/>
    <property type="evidence" value="ECO:0007669"/>
    <property type="project" value="TreeGrafter"/>
</dbReference>
<dbReference type="CDD" id="cd15184">
    <property type="entry name" value="7tmA_CCR5_CCR2"/>
    <property type="match status" value="1"/>
</dbReference>
<dbReference type="FunFam" id="1.20.1070.10:FF:000026">
    <property type="entry name" value="C-C chemokine receptor type 5"/>
    <property type="match status" value="1"/>
</dbReference>
<dbReference type="Gene3D" id="1.20.1070.10">
    <property type="entry name" value="Rhodopsin 7-helix transmembrane proteins"/>
    <property type="match status" value="1"/>
</dbReference>
<dbReference type="InterPro" id="IPR050119">
    <property type="entry name" value="CCR1-9-like"/>
</dbReference>
<dbReference type="InterPro" id="IPR002240">
    <property type="entry name" value="Chemokine_CCR5"/>
</dbReference>
<dbReference type="InterPro" id="IPR000355">
    <property type="entry name" value="Chemokine_rcpt"/>
</dbReference>
<dbReference type="InterPro" id="IPR000276">
    <property type="entry name" value="GPCR_Rhodpsn"/>
</dbReference>
<dbReference type="InterPro" id="IPR017452">
    <property type="entry name" value="GPCR_Rhodpsn_7TM"/>
</dbReference>
<dbReference type="PANTHER" id="PTHR10489:SF686">
    <property type="entry name" value="C-C CHEMOKINE RECEPTOR TYPE 5"/>
    <property type="match status" value="1"/>
</dbReference>
<dbReference type="PANTHER" id="PTHR10489">
    <property type="entry name" value="CELL ADHESION MOLECULE"/>
    <property type="match status" value="1"/>
</dbReference>
<dbReference type="Pfam" id="PF00001">
    <property type="entry name" value="7tm_1"/>
    <property type="match status" value="1"/>
</dbReference>
<dbReference type="PRINTS" id="PR00657">
    <property type="entry name" value="CCCHEMOKINER"/>
</dbReference>
<dbReference type="PRINTS" id="PR01110">
    <property type="entry name" value="CHEMOKINER5"/>
</dbReference>
<dbReference type="PRINTS" id="PR00237">
    <property type="entry name" value="GPCRRHODOPSN"/>
</dbReference>
<dbReference type="SUPFAM" id="SSF81321">
    <property type="entry name" value="Family A G protein-coupled receptor-like"/>
    <property type="match status" value="1"/>
</dbReference>
<dbReference type="PROSITE" id="PS00237">
    <property type="entry name" value="G_PROTEIN_RECEP_F1_1"/>
    <property type="match status" value="1"/>
</dbReference>
<dbReference type="PROSITE" id="PS50262">
    <property type="entry name" value="G_PROTEIN_RECEP_F1_2"/>
    <property type="match status" value="1"/>
</dbReference>
<accession>O97975</accession>
<protein>
    <recommendedName>
        <fullName>C-C chemokine receptor type 5</fullName>
        <shortName>C-C CKR-5</shortName>
        <shortName>CC-CKR-5</shortName>
        <shortName>CCR-5</shortName>
        <shortName>CCR5</shortName>
    </recommendedName>
    <cdAntigenName>CD195</cdAntigenName>
</protein>
<organism>
    <name type="scientific">Macaca arctoides</name>
    <name type="common">Stump-tailed macaque</name>
    <dbReference type="NCBI Taxonomy" id="9540"/>
    <lineage>
        <taxon>Eukaryota</taxon>
        <taxon>Metazoa</taxon>
        <taxon>Chordata</taxon>
        <taxon>Craniata</taxon>
        <taxon>Vertebrata</taxon>
        <taxon>Euteleostomi</taxon>
        <taxon>Mammalia</taxon>
        <taxon>Eutheria</taxon>
        <taxon>Euarchontoglires</taxon>
        <taxon>Primates</taxon>
        <taxon>Haplorrhini</taxon>
        <taxon>Catarrhini</taxon>
        <taxon>Cercopithecidae</taxon>
        <taxon>Cercopithecinae</taxon>
        <taxon>Macaca</taxon>
    </lineage>
</organism>
<proteinExistence type="inferred from homology"/>
<keyword id="KW-1003">Cell membrane</keyword>
<keyword id="KW-1015">Disulfide bond</keyword>
<keyword id="KW-0297">G-protein coupled receptor</keyword>
<keyword id="KW-0325">Glycoprotein</keyword>
<keyword id="KW-0449">Lipoprotein</keyword>
<keyword id="KW-0472">Membrane</keyword>
<keyword id="KW-0564">Palmitate</keyword>
<keyword id="KW-0597">Phosphoprotein</keyword>
<keyword id="KW-0675">Receptor</keyword>
<keyword id="KW-0765">Sulfation</keyword>
<keyword id="KW-0807">Transducer</keyword>
<keyword id="KW-0812">Transmembrane</keyword>
<keyword id="KW-1133">Transmembrane helix</keyword>
<comment type="function">
    <text evidence="1">Receptor for a number of inflammatory CC-chemokines including CCL3/MIP-1-alpha, CCL4/MIP-1-beta and RANTES and subsequently transduces a signal by increasing the intracellular calcium ion level. May play a role in the control of granulocytic lineage proliferation or differentiation. Participates in T-lymphocyte migration to the infection site by acting as a chemotactic receptor.</text>
</comment>
<comment type="subunit">
    <text evidence="1">Interacts with PRAF2. Efficient ligand binding to CCL3/MIP-1alpha and CCL4/MIP-1beta requires sulfation, O-glycosylation and sialic acid modifications. Glycosylation on Ser-6 is required for efficient binding of CCL4. Interacts with GRK2. Interacts with ARRB1 and ARRB2. Interacts with CNIH4. Interacts with S100A4; this interaction stimulates T-lymphocyte chemotaxis.</text>
</comment>
<comment type="subcellular location">
    <subcellularLocation>
        <location evidence="2">Cell membrane</location>
        <topology evidence="2">Multi-pass membrane protein</topology>
    </subcellularLocation>
</comment>
<comment type="PTM">
    <text evidence="1">Sulfated on at least 2 of the N-terminal tyrosines. Sulfation is required for efficient binding of the chemokines, CCL3 and CCL4 (By similarity).</text>
</comment>
<comment type="PTM">
    <text evidence="1">Palmitoylation in the C-terminal is important for cell surface expression.</text>
</comment>
<comment type="PTM">
    <text evidence="1">Phosphorylation on serine residues in the C-terminal is stimulated by binding CC chemokines especially by APO-RANTES.</text>
</comment>
<comment type="PTM">
    <text evidence="1">O-glycosylated, but not N-glycosylated. Ser-6 appears to be the major site even if Ser-7 may be also O-glycosylated. Also sialylated glycans present which contribute to chemokine binding. Thr-16 and Ser-17 may also be glycosylated and, if so, with small moieties such as a T-antigen.</text>
</comment>
<comment type="similarity">
    <text evidence="4">Belongs to the G-protein coupled receptor 1 family.</text>
</comment>
<sequence length="352" mass="40521">MDYQVSSPTYDIDYYTSEPCQKINVKQIAARLLPPLYSLVFIFGFVGNILVVLILINCKRLKSMTDIYLLNLAISDLLFLLTVPFWAHYAAAQWDFGNTMCQLLTGLYFIGFFSGIFFIILLTIDRYLAIVHAVFALKARTVTFGVVTSVITWVVAVFASLPGIIFTRSQREGLHYTCSSHFPYSQYQFWKNFQTLKMVILGLVLPLLVMVICYSGILKTLLRCRNEKKRHRAVRLIFTIMIVYFLFWAPYNIVLLLNTFQEFFGLNNCSSSNRLDQAMQVTETLGMTHCCINPIIYAFVGEKFRNYLLVFFQKHIAKRFCKCCSIFQQEAPERASSVYTRSTAEQEISVGL</sequence>